<accession>A0K724</accession>
<protein>
    <recommendedName>
        <fullName evidence="1">Ribose-5-phosphate isomerase A</fullName>
        <ecNumber evidence="1">5.3.1.6</ecNumber>
    </recommendedName>
    <alternativeName>
        <fullName evidence="1">Phosphoriboisomerase A</fullName>
        <shortName evidence="1">PRI</shortName>
    </alternativeName>
</protein>
<proteinExistence type="inferred from homology"/>
<organism>
    <name type="scientific">Burkholderia cenocepacia (strain HI2424)</name>
    <dbReference type="NCBI Taxonomy" id="331272"/>
    <lineage>
        <taxon>Bacteria</taxon>
        <taxon>Pseudomonadati</taxon>
        <taxon>Pseudomonadota</taxon>
        <taxon>Betaproteobacteria</taxon>
        <taxon>Burkholderiales</taxon>
        <taxon>Burkholderiaceae</taxon>
        <taxon>Burkholderia</taxon>
        <taxon>Burkholderia cepacia complex</taxon>
    </lineage>
</organism>
<keyword id="KW-0413">Isomerase</keyword>
<gene>
    <name evidence="1" type="primary">rpiA</name>
    <name type="ordered locus">Bcen2424_1549</name>
</gene>
<evidence type="ECO:0000255" key="1">
    <source>
        <dbReference type="HAMAP-Rule" id="MF_00170"/>
    </source>
</evidence>
<name>RPIA_BURCH</name>
<reference key="1">
    <citation type="submission" date="2006-08" db="EMBL/GenBank/DDBJ databases">
        <title>Complete sequence of chromosome 1 of Burkholderia cenocepacia HI2424.</title>
        <authorList>
            <person name="Copeland A."/>
            <person name="Lucas S."/>
            <person name="Lapidus A."/>
            <person name="Barry K."/>
            <person name="Detter J.C."/>
            <person name="Glavina del Rio T."/>
            <person name="Hammon N."/>
            <person name="Israni S."/>
            <person name="Pitluck S."/>
            <person name="Chain P."/>
            <person name="Malfatti S."/>
            <person name="Shin M."/>
            <person name="Vergez L."/>
            <person name="Schmutz J."/>
            <person name="Larimer F."/>
            <person name="Land M."/>
            <person name="Hauser L."/>
            <person name="Kyrpides N."/>
            <person name="Kim E."/>
            <person name="LiPuma J.J."/>
            <person name="Gonzalez C.F."/>
            <person name="Konstantinidis K."/>
            <person name="Tiedje J.M."/>
            <person name="Richardson P."/>
        </authorList>
    </citation>
    <scope>NUCLEOTIDE SEQUENCE [LARGE SCALE GENOMIC DNA]</scope>
    <source>
        <strain>HI2424</strain>
    </source>
</reference>
<dbReference type="EC" id="5.3.1.6" evidence="1"/>
<dbReference type="EMBL" id="CP000458">
    <property type="protein sequence ID" value="ABK08301.1"/>
    <property type="molecule type" value="Genomic_DNA"/>
</dbReference>
<dbReference type="RefSeq" id="WP_006476119.1">
    <property type="nucleotide sequence ID" value="NC_008542.1"/>
</dbReference>
<dbReference type="SMR" id="A0K724"/>
<dbReference type="GeneID" id="83048324"/>
<dbReference type="KEGG" id="bch:Bcen2424_1549"/>
<dbReference type="HOGENOM" id="CLU_056590_1_1_4"/>
<dbReference type="UniPathway" id="UPA00115">
    <property type="reaction ID" value="UER00412"/>
</dbReference>
<dbReference type="GO" id="GO:0005829">
    <property type="term" value="C:cytosol"/>
    <property type="evidence" value="ECO:0007669"/>
    <property type="project" value="TreeGrafter"/>
</dbReference>
<dbReference type="GO" id="GO:0004751">
    <property type="term" value="F:ribose-5-phosphate isomerase activity"/>
    <property type="evidence" value="ECO:0007669"/>
    <property type="project" value="UniProtKB-UniRule"/>
</dbReference>
<dbReference type="GO" id="GO:0006014">
    <property type="term" value="P:D-ribose metabolic process"/>
    <property type="evidence" value="ECO:0007669"/>
    <property type="project" value="TreeGrafter"/>
</dbReference>
<dbReference type="GO" id="GO:0009052">
    <property type="term" value="P:pentose-phosphate shunt, non-oxidative branch"/>
    <property type="evidence" value="ECO:0007669"/>
    <property type="project" value="UniProtKB-UniRule"/>
</dbReference>
<dbReference type="CDD" id="cd01398">
    <property type="entry name" value="RPI_A"/>
    <property type="match status" value="1"/>
</dbReference>
<dbReference type="FunFam" id="3.40.50.1360:FF:000001">
    <property type="entry name" value="Ribose-5-phosphate isomerase A"/>
    <property type="match status" value="1"/>
</dbReference>
<dbReference type="Gene3D" id="3.30.70.260">
    <property type="match status" value="1"/>
</dbReference>
<dbReference type="Gene3D" id="3.40.50.1360">
    <property type="match status" value="1"/>
</dbReference>
<dbReference type="HAMAP" id="MF_00170">
    <property type="entry name" value="Rib_5P_isom_A"/>
    <property type="match status" value="1"/>
</dbReference>
<dbReference type="InterPro" id="IPR037171">
    <property type="entry name" value="NagB/RpiA_transferase-like"/>
</dbReference>
<dbReference type="InterPro" id="IPR020672">
    <property type="entry name" value="Ribose5P_isomerase_typA_subgr"/>
</dbReference>
<dbReference type="InterPro" id="IPR004788">
    <property type="entry name" value="Ribose5P_isomerase_type_A"/>
</dbReference>
<dbReference type="NCBIfam" id="NF001924">
    <property type="entry name" value="PRK00702.1"/>
    <property type="match status" value="1"/>
</dbReference>
<dbReference type="NCBIfam" id="TIGR00021">
    <property type="entry name" value="rpiA"/>
    <property type="match status" value="1"/>
</dbReference>
<dbReference type="PANTHER" id="PTHR11934">
    <property type="entry name" value="RIBOSE-5-PHOSPHATE ISOMERASE"/>
    <property type="match status" value="1"/>
</dbReference>
<dbReference type="PANTHER" id="PTHR11934:SF0">
    <property type="entry name" value="RIBOSE-5-PHOSPHATE ISOMERASE"/>
    <property type="match status" value="1"/>
</dbReference>
<dbReference type="Pfam" id="PF06026">
    <property type="entry name" value="Rib_5-P_isom_A"/>
    <property type="match status" value="1"/>
</dbReference>
<dbReference type="SUPFAM" id="SSF75445">
    <property type="entry name" value="D-ribose-5-phosphate isomerase (RpiA), lid domain"/>
    <property type="match status" value="1"/>
</dbReference>
<dbReference type="SUPFAM" id="SSF100950">
    <property type="entry name" value="NagB/RpiA/CoA transferase-like"/>
    <property type="match status" value="1"/>
</dbReference>
<comment type="function">
    <text evidence="1">Catalyzes the reversible conversion of ribose-5-phosphate to ribulose 5-phosphate.</text>
</comment>
<comment type="catalytic activity">
    <reaction evidence="1">
        <text>aldehydo-D-ribose 5-phosphate = D-ribulose 5-phosphate</text>
        <dbReference type="Rhea" id="RHEA:14657"/>
        <dbReference type="ChEBI" id="CHEBI:58121"/>
        <dbReference type="ChEBI" id="CHEBI:58273"/>
        <dbReference type="EC" id="5.3.1.6"/>
    </reaction>
</comment>
<comment type="pathway">
    <text evidence="1">Carbohydrate degradation; pentose phosphate pathway; D-ribose 5-phosphate from D-ribulose 5-phosphate (non-oxidative stage): step 1/1.</text>
</comment>
<comment type="subunit">
    <text evidence="1">Homodimer.</text>
</comment>
<comment type="similarity">
    <text evidence="1">Belongs to the ribose 5-phosphate isomerase family.</text>
</comment>
<feature type="chain" id="PRO_1000016907" description="Ribose-5-phosphate isomerase A">
    <location>
        <begin position="1"/>
        <end position="231"/>
    </location>
</feature>
<feature type="active site" description="Proton acceptor" evidence="1">
    <location>
        <position position="107"/>
    </location>
</feature>
<feature type="binding site" evidence="1">
    <location>
        <begin position="32"/>
        <end position="35"/>
    </location>
    <ligand>
        <name>substrate</name>
    </ligand>
</feature>
<feature type="binding site" evidence="1">
    <location>
        <begin position="85"/>
        <end position="88"/>
    </location>
    <ligand>
        <name>substrate</name>
    </ligand>
</feature>
<feature type="binding site" evidence="1">
    <location>
        <begin position="98"/>
        <end position="101"/>
    </location>
    <ligand>
        <name>substrate</name>
    </ligand>
</feature>
<feature type="binding site" evidence="1">
    <location>
        <position position="125"/>
    </location>
    <ligand>
        <name>substrate</name>
    </ligand>
</feature>
<sequence length="231" mass="23966">MTQDELKRLVGQAAADYVIQNVPEGAVIGVGTGSTANCFIDALAAVKSRYRGAVSSSIATTERLKSHGIKVFDLNEIESLQVYVDGADEIDAGGAMIKGGGGALTREKIVASVADTFVCIADASKRVPVLGAFPLPIEVVPMARTAIGRRVTALGGVPVLRVTKDGAPYITDNGNEIIDVKGLQIADPRGFEAQVNAWPGVVTVGLFAERGANLCLLGTENGVETIVYPAG</sequence>